<dbReference type="EMBL" id="AF369910">
    <property type="protein sequence ID" value="AAL38433.1"/>
    <property type="molecule type" value="Genomic_DNA"/>
</dbReference>
<dbReference type="EMBL" id="AC004165">
    <property type="protein sequence ID" value="AAC16964.1"/>
    <property type="molecule type" value="Genomic_DNA"/>
</dbReference>
<dbReference type="EMBL" id="AC004680">
    <property type="protein sequence ID" value="AAM14983.1"/>
    <property type="molecule type" value="Genomic_DNA"/>
</dbReference>
<dbReference type="EMBL" id="CP002685">
    <property type="protein sequence ID" value="AEC08342.1"/>
    <property type="molecule type" value="Genomic_DNA"/>
</dbReference>
<dbReference type="PIR" id="T02478">
    <property type="entry name" value="T02478"/>
</dbReference>
<dbReference type="RefSeq" id="NP_180569.1">
    <property type="nucleotide sequence ID" value="NM_128563.2"/>
</dbReference>
<dbReference type="SMR" id="O64738"/>
<dbReference type="FunCoup" id="O64738">
    <property type="interactions" value="2868"/>
</dbReference>
<dbReference type="STRING" id="3702.O64738"/>
<dbReference type="PaxDb" id="3702-AT2G30080.1"/>
<dbReference type="ProteomicsDB" id="232334"/>
<dbReference type="EnsemblPlants" id="AT2G30080.1">
    <property type="protein sequence ID" value="AT2G30080.1"/>
    <property type="gene ID" value="AT2G30080"/>
</dbReference>
<dbReference type="GeneID" id="817559"/>
<dbReference type="Gramene" id="AT2G30080.1">
    <property type="protein sequence ID" value="AT2G30080.1"/>
    <property type="gene ID" value="AT2G30080"/>
</dbReference>
<dbReference type="KEGG" id="ath:AT2G30080"/>
<dbReference type="Araport" id="AT2G30080"/>
<dbReference type="TAIR" id="AT2G30080">
    <property type="gene designation" value="ZIP6"/>
</dbReference>
<dbReference type="eggNOG" id="KOG1558">
    <property type="taxonomic scope" value="Eukaryota"/>
</dbReference>
<dbReference type="HOGENOM" id="CLU_027089_3_0_1"/>
<dbReference type="InParanoid" id="O64738"/>
<dbReference type="OMA" id="CFMFSAT"/>
<dbReference type="OrthoDB" id="448280at2759"/>
<dbReference type="PhylomeDB" id="O64738"/>
<dbReference type="PRO" id="PR:O64738"/>
<dbReference type="Proteomes" id="UP000006548">
    <property type="component" value="Chromosome 2"/>
</dbReference>
<dbReference type="ExpressionAtlas" id="O64738">
    <property type="expression patterns" value="baseline and differential"/>
</dbReference>
<dbReference type="GO" id="GO:0009535">
    <property type="term" value="C:chloroplast thylakoid membrane"/>
    <property type="evidence" value="ECO:0007669"/>
    <property type="project" value="UniProtKB-SubCell"/>
</dbReference>
<dbReference type="GO" id="GO:0005385">
    <property type="term" value="F:zinc ion transmembrane transporter activity"/>
    <property type="evidence" value="ECO:0007669"/>
    <property type="project" value="InterPro"/>
</dbReference>
<dbReference type="GO" id="GO:0009624">
    <property type="term" value="P:response to nematode"/>
    <property type="evidence" value="ECO:0007007"/>
    <property type="project" value="TAIR"/>
</dbReference>
<dbReference type="InterPro" id="IPR003689">
    <property type="entry name" value="ZIP"/>
</dbReference>
<dbReference type="InterPro" id="IPR004698">
    <property type="entry name" value="Zn/Fe_permease_fun/pln"/>
</dbReference>
<dbReference type="NCBIfam" id="TIGR00820">
    <property type="entry name" value="zip"/>
    <property type="match status" value="1"/>
</dbReference>
<dbReference type="PANTHER" id="PTHR11040:SF26">
    <property type="entry name" value="ZINC TRANSPORTER 6, CHLOROPLASTIC"/>
    <property type="match status" value="1"/>
</dbReference>
<dbReference type="PANTHER" id="PTHR11040">
    <property type="entry name" value="ZINC/IRON TRANSPORTER"/>
    <property type="match status" value="1"/>
</dbReference>
<dbReference type="Pfam" id="PF02535">
    <property type="entry name" value="Zip"/>
    <property type="match status" value="1"/>
</dbReference>
<organism>
    <name type="scientific">Arabidopsis thaliana</name>
    <name type="common">Mouse-ear cress</name>
    <dbReference type="NCBI Taxonomy" id="3702"/>
    <lineage>
        <taxon>Eukaryota</taxon>
        <taxon>Viridiplantae</taxon>
        <taxon>Streptophyta</taxon>
        <taxon>Embryophyta</taxon>
        <taxon>Tracheophyta</taxon>
        <taxon>Spermatophyta</taxon>
        <taxon>Magnoliopsida</taxon>
        <taxon>eudicotyledons</taxon>
        <taxon>Gunneridae</taxon>
        <taxon>Pentapetalae</taxon>
        <taxon>rosids</taxon>
        <taxon>malvids</taxon>
        <taxon>Brassicales</taxon>
        <taxon>Brassicaceae</taxon>
        <taxon>Camelineae</taxon>
        <taxon>Arabidopsis</taxon>
    </lineage>
</organism>
<feature type="transit peptide" description="Chloroplast" evidence="2">
    <location>
        <begin position="1"/>
        <end status="unknown"/>
    </location>
</feature>
<feature type="chain" id="PRO_0000041644" description="Zinc transporter 6, chloroplastic">
    <location>
        <begin status="unknown"/>
        <end position="341"/>
    </location>
</feature>
<feature type="topological domain" description="Lumenal" evidence="2">
    <location>
        <begin status="unknown"/>
        <end position="27"/>
    </location>
</feature>
<feature type="transmembrane region" description="Helical" evidence="2">
    <location>
        <begin position="28"/>
        <end position="48"/>
    </location>
</feature>
<feature type="topological domain" description="Cytoplasmic" evidence="2">
    <location>
        <begin position="49"/>
        <end position="61"/>
    </location>
</feature>
<feature type="transmembrane region" description="Helical" evidence="2">
    <location>
        <begin position="62"/>
        <end position="82"/>
    </location>
</feature>
<feature type="topological domain" description="Lumenal" evidence="2">
    <location>
        <begin position="83"/>
        <end position="102"/>
    </location>
</feature>
<feature type="transmembrane region" description="Helical" evidence="2">
    <location>
        <begin position="103"/>
        <end position="123"/>
    </location>
</feature>
<feature type="topological domain" description="Cytoplasmic" evidence="2">
    <location>
        <begin position="124"/>
        <end position="179"/>
    </location>
</feature>
<feature type="transmembrane region" description="Helical" evidence="2">
    <location>
        <begin position="180"/>
        <end position="200"/>
    </location>
</feature>
<feature type="topological domain" description="Lumenal" evidence="2">
    <location>
        <begin position="201"/>
        <end position="211"/>
    </location>
</feature>
<feature type="transmembrane region" description="Helical" evidence="2">
    <location>
        <begin position="212"/>
        <end position="232"/>
    </location>
</feature>
<feature type="topological domain" description="Cytoplasmic" evidence="2">
    <location>
        <begin position="233"/>
        <end position="243"/>
    </location>
</feature>
<feature type="transmembrane region" description="Helical" evidence="2">
    <location>
        <begin position="244"/>
        <end position="264"/>
    </location>
</feature>
<feature type="topological domain" description="Lumenal" evidence="2">
    <location>
        <begin position="265"/>
        <end position="280"/>
    </location>
</feature>
<feature type="transmembrane region" description="Helical" evidence="2">
    <location>
        <begin position="281"/>
        <end position="301"/>
    </location>
</feature>
<feature type="topological domain" description="Cytoplasmic" evidence="2">
    <location>
        <begin position="302"/>
        <end position="320"/>
    </location>
</feature>
<feature type="transmembrane region" description="Helical" evidence="2">
    <location>
        <begin position="321"/>
        <end position="341"/>
    </location>
</feature>
<accession>O64738</accession>
<comment type="function">
    <text evidence="1">May play a role in the transport of zinc in the plastids.</text>
</comment>
<comment type="subcellular location">
    <subcellularLocation>
        <location evidence="3">Plastid</location>
        <location evidence="3">Chloroplast thylakoid membrane</location>
        <topology evidence="3">Multi-pass membrane protein</topology>
    </subcellularLocation>
</comment>
<comment type="similarity">
    <text evidence="3">Belongs to the ZIP transporter (TC 2.A.5) family.</text>
</comment>
<proteinExistence type="inferred from homology"/>
<evidence type="ECO:0000250" key="1"/>
<evidence type="ECO:0000255" key="2"/>
<evidence type="ECO:0000305" key="3"/>
<gene>
    <name type="primary">ZIP6</name>
    <name type="ordered locus">At2g30080</name>
    <name type="ORF">T27E13.18</name>
</gene>
<name>ZIP6_ARATH</name>
<keyword id="KW-0150">Chloroplast</keyword>
<keyword id="KW-0406">Ion transport</keyword>
<keyword id="KW-0472">Membrane</keyword>
<keyword id="KW-0934">Plastid</keyword>
<keyword id="KW-1185">Reference proteome</keyword>
<keyword id="KW-0793">Thylakoid</keyword>
<keyword id="KW-0809">Transit peptide</keyword>
<keyword id="KW-0812">Transmembrane</keyword>
<keyword id="KW-1133">Transmembrane helix</keyword>
<keyword id="KW-0813">Transport</keyword>
<keyword id="KW-0862">Zinc</keyword>
<keyword id="KW-0864">Zinc transport</keyword>
<protein>
    <recommendedName>
        <fullName>Zinc transporter 6, chloroplastic</fullName>
    </recommendedName>
    <alternativeName>
        <fullName>ZRT/IRT-like protein 6</fullName>
    </alternativeName>
</protein>
<reference key="1">
    <citation type="journal article" date="2001" name="Plant Physiol.">
        <title>Phylogenetic relationships within cation transporter families of Arabidopsis.</title>
        <authorList>
            <person name="Maeser P."/>
            <person name="Thomine S."/>
            <person name="Schroeder J.I."/>
            <person name="Ward J.M."/>
            <person name="Hirschi K."/>
            <person name="Sze H."/>
            <person name="Talke I.N."/>
            <person name="Amtmann A."/>
            <person name="Maathuis F.J.M."/>
            <person name="Sanders D."/>
            <person name="Harper J.F."/>
            <person name="Tchieu J."/>
            <person name="Gribskov M."/>
            <person name="Persans M.W."/>
            <person name="Salt D.E."/>
            <person name="Kim S.A."/>
            <person name="Guerinot M.L."/>
        </authorList>
    </citation>
    <scope>NUCLEOTIDE SEQUENCE [GENOMIC DNA]</scope>
</reference>
<reference key="2">
    <citation type="journal article" date="1999" name="Nature">
        <title>Sequence and analysis of chromosome 2 of the plant Arabidopsis thaliana.</title>
        <authorList>
            <person name="Lin X."/>
            <person name="Kaul S."/>
            <person name="Rounsley S.D."/>
            <person name="Shea T.P."/>
            <person name="Benito M.-I."/>
            <person name="Town C.D."/>
            <person name="Fujii C.Y."/>
            <person name="Mason T.M."/>
            <person name="Bowman C.L."/>
            <person name="Barnstead M.E."/>
            <person name="Feldblyum T.V."/>
            <person name="Buell C.R."/>
            <person name="Ketchum K.A."/>
            <person name="Lee J.J."/>
            <person name="Ronning C.M."/>
            <person name="Koo H.L."/>
            <person name="Moffat K.S."/>
            <person name="Cronin L.A."/>
            <person name="Shen M."/>
            <person name="Pai G."/>
            <person name="Van Aken S."/>
            <person name="Umayam L."/>
            <person name="Tallon L.J."/>
            <person name="Gill J.E."/>
            <person name="Adams M.D."/>
            <person name="Carrera A.J."/>
            <person name="Creasy T.H."/>
            <person name="Goodman H.M."/>
            <person name="Somerville C.R."/>
            <person name="Copenhaver G.P."/>
            <person name="Preuss D."/>
            <person name="Nierman W.C."/>
            <person name="White O."/>
            <person name="Eisen J.A."/>
            <person name="Salzberg S.L."/>
            <person name="Fraser C.M."/>
            <person name="Venter J.C."/>
        </authorList>
    </citation>
    <scope>NUCLEOTIDE SEQUENCE [LARGE SCALE GENOMIC DNA]</scope>
    <source>
        <strain>cv. Columbia</strain>
    </source>
</reference>
<reference key="3">
    <citation type="journal article" date="2017" name="Plant J.">
        <title>Araport11: a complete reannotation of the Arabidopsis thaliana reference genome.</title>
        <authorList>
            <person name="Cheng C.Y."/>
            <person name="Krishnakumar V."/>
            <person name="Chan A.P."/>
            <person name="Thibaud-Nissen F."/>
            <person name="Schobel S."/>
            <person name="Town C.D."/>
        </authorList>
    </citation>
    <scope>GENOME REANNOTATION</scope>
    <source>
        <strain>cv. Columbia</strain>
    </source>
</reference>
<sequence>MASCVTGTEAAIRAAACRDGEEASHLKIVAVFAIFLTSVFGVWGPVLLAKYFHGKPLYDKAILVIKCFAAGVILSTSLVHVLPEAFESLADCQVSSRHPWKDFPFAGLVTMIGAITALLVDLTASEHMGHGGGGGGDGGMEYMPVGKAVGGLEMKEGKCGADLEIQENSEEEIVKMKQRLVSQVLEIGIIFHSVIIGVTMGMSQNKCTIRPLIAALSFHQIFEGLGLGGCIAQAGFKAGTVVYMCLMFAVTTPLGIVLGMVIFAATGYDDQNPNALIMEGLLGSFSSGILIYMALVDLIALDFFHNKMLTTCGESGSRLKKLCFVALVLGSASMSLLALWA</sequence>